<sequence>MLPPIVLASQSPARRQLLEAARIPFRVQPSYFDESQIQSPDPVELVQKLAAAKAEAVAAQQREPVLVIGADSVLYLGGEILGKPANALEAERRLRQMRGEVGELYTGHALIDTRQNRRLVHYAVTRVFFAKPSDEEIRTYVATGEPLNCAGCFAIDGRGSLFVERIEGCPGNVIGLSLPLLRRMIQELGYSLTEAWN</sequence>
<comment type="function">
    <text evidence="1">Nucleoside triphosphate pyrophosphatase. May have a dual role in cell division arrest and in preventing the incorporation of modified nucleotides into cellular nucleic acids.</text>
</comment>
<comment type="catalytic activity">
    <reaction evidence="1">
        <text>a ribonucleoside 5'-triphosphate + H2O = a ribonucleoside 5'-phosphate + diphosphate + H(+)</text>
        <dbReference type="Rhea" id="RHEA:23996"/>
        <dbReference type="ChEBI" id="CHEBI:15377"/>
        <dbReference type="ChEBI" id="CHEBI:15378"/>
        <dbReference type="ChEBI" id="CHEBI:33019"/>
        <dbReference type="ChEBI" id="CHEBI:58043"/>
        <dbReference type="ChEBI" id="CHEBI:61557"/>
        <dbReference type="EC" id="3.6.1.9"/>
    </reaction>
</comment>
<comment type="catalytic activity">
    <reaction evidence="1">
        <text>a 2'-deoxyribonucleoside 5'-triphosphate + H2O = a 2'-deoxyribonucleoside 5'-phosphate + diphosphate + H(+)</text>
        <dbReference type="Rhea" id="RHEA:44644"/>
        <dbReference type="ChEBI" id="CHEBI:15377"/>
        <dbReference type="ChEBI" id="CHEBI:15378"/>
        <dbReference type="ChEBI" id="CHEBI:33019"/>
        <dbReference type="ChEBI" id="CHEBI:61560"/>
        <dbReference type="ChEBI" id="CHEBI:65317"/>
        <dbReference type="EC" id="3.6.1.9"/>
    </reaction>
</comment>
<comment type="cofactor">
    <cofactor evidence="1">
        <name>a divalent metal cation</name>
        <dbReference type="ChEBI" id="CHEBI:60240"/>
    </cofactor>
</comment>
<comment type="subcellular location">
    <subcellularLocation>
        <location evidence="1">Cytoplasm</location>
    </subcellularLocation>
</comment>
<comment type="similarity">
    <text evidence="1">Belongs to the Maf family.</text>
</comment>
<proteinExistence type="inferred from homology"/>
<keyword id="KW-0963">Cytoplasm</keyword>
<keyword id="KW-0378">Hydrolase</keyword>
<keyword id="KW-0546">Nucleotide metabolism</keyword>
<reference key="1">
    <citation type="journal article" date="2007" name="ISME J.">
        <title>Population level functional diversity in a microbial community revealed by comparative genomic and metagenomic analyses.</title>
        <authorList>
            <person name="Bhaya D."/>
            <person name="Grossman A.R."/>
            <person name="Steunou A.-S."/>
            <person name="Khuri N."/>
            <person name="Cohan F.M."/>
            <person name="Hamamura N."/>
            <person name="Melendrez M.C."/>
            <person name="Bateson M.M."/>
            <person name="Ward D.M."/>
            <person name="Heidelberg J.F."/>
        </authorList>
    </citation>
    <scope>NUCLEOTIDE SEQUENCE [LARGE SCALE GENOMIC DNA]</scope>
    <source>
        <strain>JA-3-3Ab</strain>
    </source>
</reference>
<name>NTPP_SYNJA</name>
<feature type="chain" id="PRO_0000267449" description="Nucleoside triphosphate pyrophosphatase">
    <location>
        <begin position="1"/>
        <end position="197"/>
    </location>
</feature>
<feature type="active site" description="Proton acceptor" evidence="1">
    <location>
        <position position="71"/>
    </location>
</feature>
<evidence type="ECO:0000255" key="1">
    <source>
        <dbReference type="HAMAP-Rule" id="MF_00528"/>
    </source>
</evidence>
<organism>
    <name type="scientific">Synechococcus sp. (strain JA-3-3Ab)</name>
    <name type="common">Cyanobacteria bacterium Yellowstone A-Prime</name>
    <dbReference type="NCBI Taxonomy" id="321327"/>
    <lineage>
        <taxon>Bacteria</taxon>
        <taxon>Bacillati</taxon>
        <taxon>Cyanobacteriota</taxon>
        <taxon>Cyanophyceae</taxon>
        <taxon>Synechococcales</taxon>
        <taxon>Synechococcaceae</taxon>
        <taxon>Synechococcus</taxon>
    </lineage>
</organism>
<accession>Q2JXB4</accession>
<dbReference type="EC" id="3.6.1.9" evidence="1"/>
<dbReference type="EMBL" id="CP000239">
    <property type="protein sequence ID" value="ABC98578.1"/>
    <property type="molecule type" value="Genomic_DNA"/>
</dbReference>
<dbReference type="RefSeq" id="WP_011429267.1">
    <property type="nucleotide sequence ID" value="NC_007775.1"/>
</dbReference>
<dbReference type="SMR" id="Q2JXB4"/>
<dbReference type="STRING" id="321327.CYA_0360"/>
<dbReference type="KEGG" id="cya:CYA_0360"/>
<dbReference type="eggNOG" id="COG0424">
    <property type="taxonomic scope" value="Bacteria"/>
</dbReference>
<dbReference type="HOGENOM" id="CLU_040416_1_2_3"/>
<dbReference type="OrthoDB" id="9807767at2"/>
<dbReference type="Proteomes" id="UP000008818">
    <property type="component" value="Chromosome"/>
</dbReference>
<dbReference type="GO" id="GO:0005737">
    <property type="term" value="C:cytoplasm"/>
    <property type="evidence" value="ECO:0007669"/>
    <property type="project" value="UniProtKB-SubCell"/>
</dbReference>
<dbReference type="GO" id="GO:0047429">
    <property type="term" value="F:nucleoside triphosphate diphosphatase activity"/>
    <property type="evidence" value="ECO:0007669"/>
    <property type="project" value="UniProtKB-EC"/>
</dbReference>
<dbReference type="GO" id="GO:0009117">
    <property type="term" value="P:nucleotide metabolic process"/>
    <property type="evidence" value="ECO:0007669"/>
    <property type="project" value="UniProtKB-KW"/>
</dbReference>
<dbReference type="CDD" id="cd00555">
    <property type="entry name" value="Maf"/>
    <property type="match status" value="1"/>
</dbReference>
<dbReference type="Gene3D" id="3.90.950.10">
    <property type="match status" value="1"/>
</dbReference>
<dbReference type="HAMAP" id="MF_00528">
    <property type="entry name" value="Maf"/>
    <property type="match status" value="1"/>
</dbReference>
<dbReference type="InterPro" id="IPR029001">
    <property type="entry name" value="ITPase-like_fam"/>
</dbReference>
<dbReference type="InterPro" id="IPR003697">
    <property type="entry name" value="Maf-like"/>
</dbReference>
<dbReference type="NCBIfam" id="TIGR00172">
    <property type="entry name" value="maf"/>
    <property type="match status" value="1"/>
</dbReference>
<dbReference type="PANTHER" id="PTHR43213">
    <property type="entry name" value="BIFUNCTIONAL DTTP/UTP PYROPHOSPHATASE/METHYLTRANSFERASE PROTEIN-RELATED"/>
    <property type="match status" value="1"/>
</dbReference>
<dbReference type="PANTHER" id="PTHR43213:SF5">
    <property type="entry name" value="BIFUNCTIONAL DTTP_UTP PYROPHOSPHATASE_METHYLTRANSFERASE PROTEIN-RELATED"/>
    <property type="match status" value="1"/>
</dbReference>
<dbReference type="Pfam" id="PF02545">
    <property type="entry name" value="Maf"/>
    <property type="match status" value="1"/>
</dbReference>
<dbReference type="PIRSF" id="PIRSF006305">
    <property type="entry name" value="Maf"/>
    <property type="match status" value="1"/>
</dbReference>
<dbReference type="SUPFAM" id="SSF52972">
    <property type="entry name" value="ITPase-like"/>
    <property type="match status" value="1"/>
</dbReference>
<gene>
    <name type="ordered locus">CYA_0360</name>
</gene>
<protein>
    <recommendedName>
        <fullName evidence="1">Nucleoside triphosphate pyrophosphatase</fullName>
        <ecNumber evidence="1">3.6.1.9</ecNumber>
    </recommendedName>
    <alternativeName>
        <fullName evidence="1">Nucleotide pyrophosphatase</fullName>
        <shortName evidence="1">Nucleotide PPase</shortName>
    </alternativeName>
</protein>